<reference key="1">
    <citation type="submission" date="2003-03" db="EMBL/GenBank/DDBJ databases">
        <authorList>
            <consortium name="NIH - Zebrafish Gene Collection (ZGC) project"/>
        </authorList>
    </citation>
    <scope>NUCLEOTIDE SEQUENCE [LARGE SCALE MRNA]</scope>
</reference>
<accession>Q7ZUH1</accession>
<gene>
    <name evidence="1" type="primary">rtraf</name>
    <name type="ORF">zgc:56576</name>
</gene>
<organism>
    <name type="scientific">Danio rerio</name>
    <name type="common">Zebrafish</name>
    <name type="synonym">Brachydanio rerio</name>
    <dbReference type="NCBI Taxonomy" id="7955"/>
    <lineage>
        <taxon>Eukaryota</taxon>
        <taxon>Metazoa</taxon>
        <taxon>Chordata</taxon>
        <taxon>Craniata</taxon>
        <taxon>Vertebrata</taxon>
        <taxon>Euteleostomi</taxon>
        <taxon>Actinopterygii</taxon>
        <taxon>Neopterygii</taxon>
        <taxon>Teleostei</taxon>
        <taxon>Ostariophysi</taxon>
        <taxon>Cypriniformes</taxon>
        <taxon>Danionidae</taxon>
        <taxon>Danioninae</taxon>
        <taxon>Danio</taxon>
    </lineage>
</organism>
<name>RTRAF_DANRE</name>
<evidence type="ECO:0000250" key="1">
    <source>
        <dbReference type="UniProtKB" id="Q9Y224"/>
    </source>
</evidence>
<evidence type="ECO:0000305" key="2"/>
<keyword id="KW-0963">Cytoplasm</keyword>
<keyword id="KW-0206">Cytoskeleton</keyword>
<keyword id="KW-0539">Nucleus</keyword>
<keyword id="KW-1185">Reference proteome</keyword>
<keyword id="KW-0694">RNA-binding</keyword>
<keyword id="KW-0804">Transcription</keyword>
<keyword id="KW-0805">Transcription regulation</keyword>
<proteinExistence type="evidence at transcript level"/>
<sequence length="242" mass="27858">MFRRKLTALEYHNPTGFDCKDETEFRNFIVWLEDQKIRHYKIEDRGNLRNIPSSDWPKYFEKYLQDVNCPFSVQERQETVDWLLGLAVRFEYGDNVEKYRNCKPVTETNDVQKSADPLINLDSNNPDFKAGVLALANLLKIQRHDDYLVMLKAIKILVQERLTPDAIAKASQAKEGLPVTLDKHILGFDTGDATLNEAAQVLRLLHIEELRELQTKINEAIVAVQAIIADPKTDHRLGKVGR</sequence>
<dbReference type="EMBL" id="BC049049">
    <property type="protein sequence ID" value="AAH49049.1"/>
    <property type="molecule type" value="mRNA"/>
</dbReference>
<dbReference type="SMR" id="Q7ZUH1"/>
<dbReference type="FunCoup" id="Q7ZUH1">
    <property type="interactions" value="3059"/>
</dbReference>
<dbReference type="STRING" id="7955.ENSDARP00000003814"/>
<dbReference type="PaxDb" id="7955-ENSDARP00000003814"/>
<dbReference type="DNASU" id="393240"/>
<dbReference type="AGR" id="ZFIN:ZDB-GENE-040426-1082"/>
<dbReference type="ZFIN" id="ZDB-GENE-040426-1082">
    <property type="gene designation" value="rtraf"/>
</dbReference>
<dbReference type="eggNOG" id="KOG4380">
    <property type="taxonomic scope" value="Eukaryota"/>
</dbReference>
<dbReference type="InParanoid" id="Q7ZUH1"/>
<dbReference type="OrthoDB" id="514167at2759"/>
<dbReference type="PhylomeDB" id="Q7ZUH1"/>
<dbReference type="PRO" id="PR:Q7ZUH1"/>
<dbReference type="Proteomes" id="UP000000437">
    <property type="component" value="Unplaced"/>
</dbReference>
<dbReference type="GO" id="GO:0005813">
    <property type="term" value="C:centrosome"/>
    <property type="evidence" value="ECO:0000250"/>
    <property type="project" value="UniProtKB"/>
</dbReference>
<dbReference type="GO" id="GO:0005737">
    <property type="term" value="C:cytoplasm"/>
    <property type="evidence" value="ECO:0000250"/>
    <property type="project" value="UniProtKB"/>
</dbReference>
<dbReference type="GO" id="GO:0005829">
    <property type="term" value="C:cytosol"/>
    <property type="evidence" value="ECO:0007669"/>
    <property type="project" value="UniProtKB-SubCell"/>
</dbReference>
<dbReference type="GO" id="GO:0072686">
    <property type="term" value="C:mitotic spindle"/>
    <property type="evidence" value="ECO:0000250"/>
    <property type="project" value="UniProtKB"/>
</dbReference>
<dbReference type="GO" id="GO:0005634">
    <property type="term" value="C:nucleus"/>
    <property type="evidence" value="ECO:0000250"/>
    <property type="project" value="UniProtKB"/>
</dbReference>
<dbReference type="GO" id="GO:0048471">
    <property type="term" value="C:perinuclear region of cytoplasm"/>
    <property type="evidence" value="ECO:0000250"/>
    <property type="project" value="UniProtKB"/>
</dbReference>
<dbReference type="GO" id="GO:0072669">
    <property type="term" value="C:tRNA-splicing ligase complex"/>
    <property type="evidence" value="ECO:0000250"/>
    <property type="project" value="UniProtKB"/>
</dbReference>
<dbReference type="GO" id="GO:0003723">
    <property type="term" value="F:RNA binding"/>
    <property type="evidence" value="ECO:0000250"/>
    <property type="project" value="UniProtKB"/>
</dbReference>
<dbReference type="GO" id="GO:0000993">
    <property type="term" value="F:RNA polymerase II complex binding"/>
    <property type="evidence" value="ECO:0000250"/>
    <property type="project" value="UniProtKB"/>
</dbReference>
<dbReference type="GO" id="GO:0006469">
    <property type="term" value="P:negative regulation of protein kinase activity"/>
    <property type="evidence" value="ECO:0000250"/>
    <property type="project" value="UniProtKB"/>
</dbReference>
<dbReference type="GO" id="GO:0045944">
    <property type="term" value="P:positive regulation of transcription by RNA polymerase II"/>
    <property type="evidence" value="ECO:0000250"/>
    <property type="project" value="UniProtKB"/>
</dbReference>
<dbReference type="GO" id="GO:0006388">
    <property type="term" value="P:tRNA splicing, via endonucleolytic cleavage and ligation"/>
    <property type="evidence" value="ECO:0000250"/>
    <property type="project" value="UniProtKB"/>
</dbReference>
<dbReference type="InterPro" id="IPR019265">
    <property type="entry name" value="RTRAF"/>
</dbReference>
<dbReference type="PANTHER" id="PTHR15924">
    <property type="entry name" value="CLE"/>
    <property type="match status" value="1"/>
</dbReference>
<dbReference type="Pfam" id="PF10036">
    <property type="entry name" value="RLL"/>
    <property type="match status" value="1"/>
</dbReference>
<comment type="function">
    <text evidence="1">RNA-binding protein involved in modulation of mRNA transcription by Polymerase II. Component of the tRNA-splicing ligase complex.</text>
</comment>
<comment type="subunit">
    <text evidence="1">Homodimer. Component of a tRNA-splicing ligase complex.</text>
</comment>
<comment type="subcellular location">
    <subcellularLocation>
        <location evidence="1">Nucleus</location>
    </subcellularLocation>
    <subcellularLocation>
        <location evidence="1">Cytoplasm</location>
        <location evidence="1">Cytosol</location>
    </subcellularLocation>
    <subcellularLocation>
        <location evidence="1">Cytoplasm</location>
        <location evidence="1">Perinuclear region</location>
    </subcellularLocation>
    <subcellularLocation>
        <location evidence="1">Cytoplasm</location>
        <location evidence="1">Cytoskeleton</location>
        <location evidence="1">Microtubule organizing center</location>
        <location evidence="1">Centrosome</location>
    </subcellularLocation>
    <text evidence="1">Shuttles between the cytosol and the nucleus.</text>
</comment>
<comment type="similarity">
    <text evidence="2">Belongs to the RTRAF family.</text>
</comment>
<feature type="chain" id="PRO_0000331288" description="RNA transcription, translation and transport factor protein">
    <location>
        <begin position="1"/>
        <end position="242"/>
    </location>
</feature>
<protein>
    <recommendedName>
        <fullName evidence="1">RNA transcription, translation and transport factor protein</fullName>
    </recommendedName>
</protein>